<organism>
    <name type="scientific">Nitrosomonas europaea (strain ATCC 19718 / CIP 103999 / KCTC 2705 / NBRC 14298)</name>
    <dbReference type="NCBI Taxonomy" id="228410"/>
    <lineage>
        <taxon>Bacteria</taxon>
        <taxon>Pseudomonadati</taxon>
        <taxon>Pseudomonadota</taxon>
        <taxon>Betaproteobacteria</taxon>
        <taxon>Nitrosomonadales</taxon>
        <taxon>Nitrosomonadaceae</taxon>
        <taxon>Nitrosomonas</taxon>
    </lineage>
</organism>
<gene>
    <name evidence="1" type="primary">zapD</name>
    <name type="ordered locus">NE0599</name>
</gene>
<feature type="chain" id="PRO_0000211673" description="Cell division protein ZapD">
    <location>
        <begin position="1"/>
        <end position="262"/>
    </location>
</feature>
<keyword id="KW-0131">Cell cycle</keyword>
<keyword id="KW-0132">Cell division</keyword>
<keyword id="KW-0963">Cytoplasm</keyword>
<keyword id="KW-1185">Reference proteome</keyword>
<keyword id="KW-0717">Septation</keyword>
<comment type="function">
    <text evidence="1">Cell division factor that enhances FtsZ-ring assembly. Directly interacts with FtsZ and promotes bundling of FtsZ protofilaments, with a reduction in FtsZ GTPase activity.</text>
</comment>
<comment type="subunit">
    <text evidence="1">Interacts with FtsZ.</text>
</comment>
<comment type="subcellular location">
    <subcellularLocation>
        <location evidence="1">Cytoplasm</location>
    </subcellularLocation>
    <text evidence="1">Localizes to mid-cell in an FtsZ-dependent manner.</text>
</comment>
<comment type="similarity">
    <text evidence="1">Belongs to the ZapD family.</text>
</comment>
<name>ZAPD_NITEU</name>
<dbReference type="EMBL" id="AL954747">
    <property type="protein sequence ID" value="CAD84510.1"/>
    <property type="molecule type" value="Genomic_DNA"/>
</dbReference>
<dbReference type="SMR" id="Q82WR3"/>
<dbReference type="STRING" id="228410.NE0599"/>
<dbReference type="KEGG" id="neu:NE0599"/>
<dbReference type="eggNOG" id="COG4582">
    <property type="taxonomic scope" value="Bacteria"/>
</dbReference>
<dbReference type="HOGENOM" id="CLU_076303_0_1_4"/>
<dbReference type="PhylomeDB" id="Q82WR3"/>
<dbReference type="Proteomes" id="UP000001416">
    <property type="component" value="Chromosome"/>
</dbReference>
<dbReference type="GO" id="GO:0032153">
    <property type="term" value="C:cell division site"/>
    <property type="evidence" value="ECO:0007669"/>
    <property type="project" value="TreeGrafter"/>
</dbReference>
<dbReference type="GO" id="GO:0005737">
    <property type="term" value="C:cytoplasm"/>
    <property type="evidence" value="ECO:0007669"/>
    <property type="project" value="UniProtKB-SubCell"/>
</dbReference>
<dbReference type="GO" id="GO:0000917">
    <property type="term" value="P:division septum assembly"/>
    <property type="evidence" value="ECO:0007669"/>
    <property type="project" value="UniProtKB-KW"/>
</dbReference>
<dbReference type="GO" id="GO:0043093">
    <property type="term" value="P:FtsZ-dependent cytokinesis"/>
    <property type="evidence" value="ECO:0007669"/>
    <property type="project" value="UniProtKB-UniRule"/>
</dbReference>
<dbReference type="Gene3D" id="1.10.3900.10">
    <property type="entry name" value="YacF-like"/>
    <property type="match status" value="1"/>
</dbReference>
<dbReference type="Gene3D" id="2.60.440.10">
    <property type="entry name" value="YacF-like domains"/>
    <property type="match status" value="1"/>
</dbReference>
<dbReference type="HAMAP" id="MF_01092">
    <property type="entry name" value="ZapD"/>
    <property type="match status" value="1"/>
</dbReference>
<dbReference type="InterPro" id="IPR009777">
    <property type="entry name" value="ZapD"/>
</dbReference>
<dbReference type="InterPro" id="IPR027462">
    <property type="entry name" value="ZapD_C"/>
</dbReference>
<dbReference type="InterPro" id="IPR036268">
    <property type="entry name" value="ZapD_sf"/>
</dbReference>
<dbReference type="NCBIfam" id="NF003656">
    <property type="entry name" value="PRK05287.1-4"/>
    <property type="match status" value="1"/>
</dbReference>
<dbReference type="PANTHER" id="PTHR39455">
    <property type="entry name" value="CELL DIVISION PROTEIN ZAPD"/>
    <property type="match status" value="1"/>
</dbReference>
<dbReference type="PANTHER" id="PTHR39455:SF1">
    <property type="entry name" value="CELL DIVISION PROTEIN ZAPD"/>
    <property type="match status" value="1"/>
</dbReference>
<dbReference type="Pfam" id="PF07072">
    <property type="entry name" value="ZapD"/>
    <property type="match status" value="1"/>
</dbReference>
<dbReference type="SUPFAM" id="SSF160950">
    <property type="entry name" value="YacF-like"/>
    <property type="match status" value="1"/>
</dbReference>
<protein>
    <recommendedName>
        <fullName evidence="1">Cell division protein ZapD</fullName>
    </recommendedName>
    <alternativeName>
        <fullName evidence="1">Z ring-associated protein D</fullName>
    </alternativeName>
</protein>
<accession>Q82WR3</accession>
<reference key="1">
    <citation type="journal article" date="2003" name="J. Bacteriol.">
        <title>Complete genome sequence of the ammonia-oxidizing bacterium and obligate chemolithoautotroph Nitrosomonas europaea.</title>
        <authorList>
            <person name="Chain P."/>
            <person name="Lamerdin J.E."/>
            <person name="Larimer F.W."/>
            <person name="Regala W."/>
            <person name="Lao V."/>
            <person name="Land M.L."/>
            <person name="Hauser L."/>
            <person name="Hooper A.B."/>
            <person name="Klotz M.G."/>
            <person name="Norton J."/>
            <person name="Sayavedra-Soto L.A."/>
            <person name="Arciero D.M."/>
            <person name="Hommes N.G."/>
            <person name="Whittaker M.M."/>
            <person name="Arp D.J."/>
        </authorList>
    </citation>
    <scope>NUCLEOTIDE SEQUENCE [LARGE SCALE GENOMIC DNA]</scope>
    <source>
        <strain>ATCC 19718 / CIP 103999 / KCTC 2705 / NBRC 14298</strain>
    </source>
</reference>
<proteinExistence type="inferred from homology"/>
<sequence>MLYSSNAILLTVICYELPLSERIRMLLRLEDLFDKIDFFSARDTSFEHHAVLVALFEILDVTSRSDLKSDLLQELDKQRTMLEGLRSNPEVSEKALDHILQDIRAAFRGLLDIPGRIGGHLRDDEWLMSVKQRMSIPGAACEFDLPAYHYWLNLAPEIRREDLKDWITPFTPIRSGINIVLNMLRNSGKNCCYTAVQGLFQQAGSEHQAHLLRLHISSEFPCVPEISANKYALNIRFVPWRSDHKTEVYEEDIPFELTFCSL</sequence>
<evidence type="ECO:0000255" key="1">
    <source>
        <dbReference type="HAMAP-Rule" id="MF_01092"/>
    </source>
</evidence>